<reference key="1">
    <citation type="journal article" date="2005" name="Proc. Natl. Acad. Sci. U.S.A.">
        <title>The complete genome sequence of Mycobacterium avium subspecies paratuberculosis.</title>
        <authorList>
            <person name="Li L."/>
            <person name="Bannantine J.P."/>
            <person name="Zhang Q."/>
            <person name="Amonsin A."/>
            <person name="May B.J."/>
            <person name="Alt D."/>
            <person name="Banerji N."/>
            <person name="Kanjilal S."/>
            <person name="Kapur V."/>
        </authorList>
    </citation>
    <scope>NUCLEOTIDE SEQUENCE [LARGE SCALE GENOMIC DNA]</scope>
    <source>
        <strain>ATCC BAA-968 / K-10</strain>
    </source>
</reference>
<comment type="function">
    <text evidence="1">Required for rescue of stalled ribosomes mediated by trans-translation. Binds to transfer-messenger RNA (tmRNA), required for stable association of tmRNA with ribosomes. tmRNA and SmpB together mimic tRNA shape, replacing the anticodon stem-loop with SmpB. tmRNA is encoded by the ssrA gene; the 2 termini fold to resemble tRNA(Ala) and it encodes a 'tag peptide', a short internal open reading frame. During trans-translation Ala-aminoacylated tmRNA acts like a tRNA, entering the A-site of stalled ribosomes, displacing the stalled mRNA. The ribosome then switches to translate the ORF on the tmRNA; the nascent peptide is terminated with the 'tag peptide' encoded by the tmRNA and targeted for degradation. The ribosome is freed to recommence translation, which seems to be the essential function of trans-translation.</text>
</comment>
<comment type="subcellular location">
    <subcellularLocation>
        <location evidence="1">Cytoplasm</location>
    </subcellularLocation>
    <text evidence="1">The tmRNA-SmpB complex associates with stalled 70S ribosomes.</text>
</comment>
<comment type="similarity">
    <text evidence="1">Belongs to the SmpB family.</text>
</comment>
<name>SSRP_MYCPA</name>
<dbReference type="EMBL" id="AE016958">
    <property type="protein sequence ID" value="AAS05718.1"/>
    <property type="molecule type" value="Genomic_DNA"/>
</dbReference>
<dbReference type="RefSeq" id="WP_003874853.1">
    <property type="nucleotide sequence ID" value="NZ_CP106873.1"/>
</dbReference>
<dbReference type="SMR" id="Q73V46"/>
<dbReference type="STRING" id="262316.MAP_3170c"/>
<dbReference type="GeneID" id="75271484"/>
<dbReference type="KEGG" id="mpa:MAP_3170c"/>
<dbReference type="eggNOG" id="COG0691">
    <property type="taxonomic scope" value="Bacteria"/>
</dbReference>
<dbReference type="HOGENOM" id="CLU_108953_2_1_11"/>
<dbReference type="Proteomes" id="UP000000580">
    <property type="component" value="Chromosome"/>
</dbReference>
<dbReference type="GO" id="GO:0005829">
    <property type="term" value="C:cytosol"/>
    <property type="evidence" value="ECO:0007669"/>
    <property type="project" value="TreeGrafter"/>
</dbReference>
<dbReference type="GO" id="GO:0003723">
    <property type="term" value="F:RNA binding"/>
    <property type="evidence" value="ECO:0007669"/>
    <property type="project" value="UniProtKB-UniRule"/>
</dbReference>
<dbReference type="GO" id="GO:0070929">
    <property type="term" value="P:trans-translation"/>
    <property type="evidence" value="ECO:0007669"/>
    <property type="project" value="UniProtKB-UniRule"/>
</dbReference>
<dbReference type="CDD" id="cd09294">
    <property type="entry name" value="SmpB"/>
    <property type="match status" value="1"/>
</dbReference>
<dbReference type="Gene3D" id="2.40.280.10">
    <property type="match status" value="1"/>
</dbReference>
<dbReference type="HAMAP" id="MF_00023">
    <property type="entry name" value="SmpB"/>
    <property type="match status" value="1"/>
</dbReference>
<dbReference type="InterPro" id="IPR023620">
    <property type="entry name" value="SmpB"/>
</dbReference>
<dbReference type="InterPro" id="IPR000037">
    <property type="entry name" value="SsrA-bd_prot"/>
</dbReference>
<dbReference type="InterPro" id="IPR020081">
    <property type="entry name" value="SsrA-bd_prot_CS"/>
</dbReference>
<dbReference type="NCBIfam" id="NF003843">
    <property type="entry name" value="PRK05422.1"/>
    <property type="match status" value="1"/>
</dbReference>
<dbReference type="NCBIfam" id="TIGR00086">
    <property type="entry name" value="smpB"/>
    <property type="match status" value="1"/>
</dbReference>
<dbReference type="PANTHER" id="PTHR30308:SF2">
    <property type="entry name" value="SSRA-BINDING PROTEIN"/>
    <property type="match status" value="1"/>
</dbReference>
<dbReference type="PANTHER" id="PTHR30308">
    <property type="entry name" value="TMRNA-BINDING COMPONENT OF TRANS-TRANSLATION TAGGING COMPLEX"/>
    <property type="match status" value="1"/>
</dbReference>
<dbReference type="Pfam" id="PF01668">
    <property type="entry name" value="SmpB"/>
    <property type="match status" value="1"/>
</dbReference>
<dbReference type="SUPFAM" id="SSF74982">
    <property type="entry name" value="Small protein B (SmpB)"/>
    <property type="match status" value="1"/>
</dbReference>
<dbReference type="PROSITE" id="PS01317">
    <property type="entry name" value="SSRP"/>
    <property type="match status" value="1"/>
</dbReference>
<feature type="chain" id="PRO_0000102987" description="SsrA-binding protein">
    <location>
        <begin position="1"/>
        <end position="169"/>
    </location>
</feature>
<gene>
    <name evidence="1" type="primary">smpB</name>
    <name type="ordered locus">MAP_3170c</name>
</gene>
<organism>
    <name type="scientific">Mycolicibacterium paratuberculosis (strain ATCC BAA-968 / K-10)</name>
    <name type="common">Mycobacterium paratuberculosis</name>
    <dbReference type="NCBI Taxonomy" id="262316"/>
    <lineage>
        <taxon>Bacteria</taxon>
        <taxon>Bacillati</taxon>
        <taxon>Actinomycetota</taxon>
        <taxon>Actinomycetes</taxon>
        <taxon>Mycobacteriales</taxon>
        <taxon>Mycobacteriaceae</taxon>
        <taxon>Mycobacterium</taxon>
        <taxon>Mycobacterium avium complex (MAC)</taxon>
    </lineage>
</organism>
<evidence type="ECO:0000255" key="1">
    <source>
        <dbReference type="HAMAP-Rule" id="MF_00023"/>
    </source>
</evidence>
<accession>Q73V46</accession>
<keyword id="KW-0963">Cytoplasm</keyword>
<keyword id="KW-1185">Reference proteome</keyword>
<keyword id="KW-0694">RNA-binding</keyword>
<protein>
    <recommendedName>
        <fullName evidence="1">SsrA-binding protein</fullName>
    </recommendedName>
    <alternativeName>
        <fullName evidence="1">Small protein B</fullName>
    </alternativeName>
</protein>
<sequence length="169" mass="18955">MAKGSGRAKAAGGKGGSKQIIATNRKARHNYSIIETYEAGVALQGTEVKSLREGQASLADAFATIDDGEVWLRNLYIPEYQHGSWTNHDPRRNRKLLLHRQQIDRLVGKIRDGNLALMPLSLYFSEGKVKVELALARGKKAYDKRQDLAQRDAQREVVRQLGRRTKGMI</sequence>
<proteinExistence type="inferred from homology"/>